<feature type="signal peptide">
    <location>
        <begin position="1"/>
        <end position="22"/>
    </location>
</feature>
<feature type="chain" id="PRO_0000020146" description="Major outer membrane porin, serovar C">
    <location>
        <begin position="23"/>
        <end position="397"/>
    </location>
</feature>
<name>MOMPC_CHLTH</name>
<gene>
    <name type="primary">ompA</name>
    <name type="synonym">omp1</name>
    <name type="synonym">omp1C</name>
</gene>
<evidence type="ECO:0000250" key="1"/>
<evidence type="ECO:0000305" key="2"/>
<protein>
    <recommendedName>
        <fullName>Major outer membrane porin, serovar C</fullName>
        <shortName>MOMP</shortName>
    </recommendedName>
</protein>
<sequence length="397" mass="42893">MKKLLKSVLVFAALSSASSLQALPVGNPAEPSLMIDGILWEGFGGDPCDPCTTWCDAISMRVGYYGDFVFDRVLKTDVNKEFQMGAAPTTSDVAGLQNDPTINVARPNPAYGKHMQDAEMFTNAAYMALNIWDRFDVFCTLGATTGYLKGNSASFNLVGLFGTKTQSSSFNTAKLIPNTALNEAVVELYINTTFAWSVGARAALWECGCATLGASFQYAQSKPKVEELNVLCNASEFTINKPKGYVGAEFPLNITAGTEAATGTKDASIDYHEWQASLALSYRLNMFTPYIGVKWSRVSFDADTIRIAQPKLAEAILDVTTLNRTTAGKGSVVSAGTDNELADTMQIVSLQLNKMKSRKSCGIAVGTTIVDADKYAVTVEARLIDERAAHVNAQFRF</sequence>
<keyword id="KW-0998">Cell outer membrane</keyword>
<keyword id="KW-0133">Cell shape</keyword>
<keyword id="KW-1015">Disulfide bond</keyword>
<keyword id="KW-0406">Ion transport</keyword>
<keyword id="KW-0472">Membrane</keyword>
<keyword id="KW-0626">Porin</keyword>
<keyword id="KW-0732">Signal</keyword>
<keyword id="KW-0812">Transmembrane</keyword>
<keyword id="KW-1134">Transmembrane beta strand</keyword>
<keyword id="KW-0813">Transport</keyword>
<reference key="1">
    <citation type="journal article" date="1987" name="J. Bacteriol.">
        <title>Diversity of Chlamydia trachomatis major outer membrane protein genes.</title>
        <authorList>
            <person name="Stephens R.S."/>
            <person name="Sanchez-Pescador R."/>
            <person name="Wagar E.A."/>
            <person name="Inouye C."/>
            <person name="Urdea M.S."/>
        </authorList>
    </citation>
    <scope>NUCLEOTIDE SEQUENCE [GENOMIC DNA]</scope>
</reference>
<reference key="2">
    <citation type="journal article" date="2000" name="J. Infect. Dis.">
        <title>Evidence for long-term cervical persistence of Chlamydia trachomatis by omp1 genotyping.</title>
        <authorList>
            <person name="Dean D."/>
            <person name="Suchland R.J."/>
            <person name="Stamm W.E."/>
        </authorList>
    </citation>
    <scope>NUCLEOTIDE SEQUENCE [GENOMIC DNA]</scope>
    <source>
        <strain>C/TW-3</strain>
    </source>
</reference>
<organism>
    <name type="scientific">Chlamydia trachomatis</name>
    <dbReference type="NCBI Taxonomy" id="813"/>
    <lineage>
        <taxon>Bacteria</taxon>
        <taxon>Pseudomonadati</taxon>
        <taxon>Chlamydiota</taxon>
        <taxon>Chlamydiia</taxon>
        <taxon>Chlamydiales</taxon>
        <taxon>Chlamydiaceae</taxon>
        <taxon>Chlamydia/Chlamydophila group</taxon>
        <taxon>Chlamydia</taxon>
    </lineage>
</organism>
<comment type="function">
    <text evidence="1">In elementary bodies (EBs, the infectious stage, which is able to survive outside the host cell) provides the structural integrity of the outer envelope through disulfide cross-links with the small cysteine-rich protein and the large cysteine-rich periplasmic protein. It has been described in publications as the Sarkosyl-insoluble COMC (Chlamydia outer membrane complex), and serves as the functional equivalent of peptidoglycan (By similarity).</text>
</comment>
<comment type="function">
    <text evidence="1">Permits diffusion of specific solutes through the outer membrane.</text>
</comment>
<comment type="subunit">
    <text>Part of a disulfide cross-linked outer membrane complex (COMC) composed of the major outer membrane porin (MOMP), the small cysteine-rich protein (OmcA) and the large cysteine-rich periplasmic protein (OmcB).</text>
</comment>
<comment type="subcellular location">
    <subcellularLocation>
        <location evidence="1">Cell outer membrane</location>
        <topology evidence="1">Multi-pass membrane protein</topology>
    </subcellularLocation>
</comment>
<comment type="developmental stage">
    <text>It is present but some of the disulfide bonds are reduced in reticulate bodies (RBs).</text>
</comment>
<comment type="similarity">
    <text evidence="2">Belongs to the chlamydial porin (CP) (TC 1.B.2) family.</text>
</comment>
<proteinExistence type="evidence at transcript level"/>
<accession>P08780</accession>
<dbReference type="EMBL" id="M17343">
    <property type="protein sequence ID" value="AAA23156.1"/>
    <property type="molecule type" value="Genomic_DNA"/>
</dbReference>
<dbReference type="EMBL" id="AF202455">
    <property type="protein sequence ID" value="AAG09443.1"/>
    <property type="molecule type" value="Genomic_DNA"/>
</dbReference>
<dbReference type="PIR" id="S11011">
    <property type="entry name" value="MMCWTC"/>
</dbReference>
<dbReference type="GO" id="GO:0009279">
    <property type="term" value="C:cell outer membrane"/>
    <property type="evidence" value="ECO:0007669"/>
    <property type="project" value="UniProtKB-SubCell"/>
</dbReference>
<dbReference type="GO" id="GO:0046930">
    <property type="term" value="C:pore complex"/>
    <property type="evidence" value="ECO:0007669"/>
    <property type="project" value="UniProtKB-KW"/>
</dbReference>
<dbReference type="GO" id="GO:0015288">
    <property type="term" value="F:porin activity"/>
    <property type="evidence" value="ECO:0007669"/>
    <property type="project" value="UniProtKB-KW"/>
</dbReference>
<dbReference type="GO" id="GO:0005198">
    <property type="term" value="F:structural molecule activity"/>
    <property type="evidence" value="ECO:0007669"/>
    <property type="project" value="InterPro"/>
</dbReference>
<dbReference type="GO" id="GO:0006811">
    <property type="term" value="P:monoatomic ion transport"/>
    <property type="evidence" value="ECO:0007669"/>
    <property type="project" value="UniProtKB-KW"/>
</dbReference>
<dbReference type="GO" id="GO:0008360">
    <property type="term" value="P:regulation of cell shape"/>
    <property type="evidence" value="ECO:0007669"/>
    <property type="project" value="UniProtKB-KW"/>
</dbReference>
<dbReference type="InterPro" id="IPR000604">
    <property type="entry name" value="Major_OMP_Chlamydia"/>
</dbReference>
<dbReference type="Pfam" id="PF01308">
    <property type="entry name" value="Chlam_OMP"/>
    <property type="match status" value="1"/>
</dbReference>
<dbReference type="PRINTS" id="PR01334">
    <property type="entry name" value="CHLAMIDIAOMP"/>
</dbReference>